<sequence>MSGNTFGKAFRVTTWGESHGPAVGAVVDGCPPGIPLTEEAIQVMMDRRKPGSSAASTTRKEEDLVHILSGVFEGLTTGTPISLMIKNKDAKSSSYDQFKNLFRPGHGDLSYQRKYGIRDYKGGGRASARETAGRVAAGAVAGLLLERVGIKTFAYTLELGSVRAKNIDPEAVSKNPFACPDMEAAEKMEARVNEVRKDGDSLGGIVQVQAAGVPAGLGEPVFDKLDAQIAKAMMSIGAVKGVEIGAGFEAARLTGSVNNDPILEDGFETNNAGGTLSGVSSGQDIVVRVAVKPIPSISVPQQTIGLDGKADTIQVGGRHDISAIPRVNVVCEAMLNLVLADFVLRQAQVRALELFAKQ</sequence>
<comment type="function">
    <text evidence="1">Catalyzes the anti-1,4-elimination of the C-3 phosphate and the C-6 proR hydrogen from 5-enolpyruvylshikimate-3-phosphate (EPSP) to yield chorismate, which is the branch point compound that serves as the starting substrate for the three terminal pathways of aromatic amino acid biosynthesis. This reaction introduces a second double bond into the aromatic ring system.</text>
</comment>
<comment type="catalytic activity">
    <reaction evidence="1">
        <text>5-O-(1-carboxyvinyl)-3-phosphoshikimate = chorismate + phosphate</text>
        <dbReference type="Rhea" id="RHEA:21020"/>
        <dbReference type="ChEBI" id="CHEBI:29748"/>
        <dbReference type="ChEBI" id="CHEBI:43474"/>
        <dbReference type="ChEBI" id="CHEBI:57701"/>
        <dbReference type="EC" id="4.2.3.5"/>
    </reaction>
</comment>
<comment type="cofactor">
    <cofactor evidence="1">
        <name>FMNH2</name>
        <dbReference type="ChEBI" id="CHEBI:57618"/>
    </cofactor>
    <text evidence="1">Reduced FMN (FMNH(2)).</text>
</comment>
<comment type="pathway">
    <text evidence="1">Metabolic intermediate biosynthesis; chorismate biosynthesis; chorismate from D-erythrose 4-phosphate and phosphoenolpyruvate: step 7/7.</text>
</comment>
<comment type="subunit">
    <text evidence="1">Homotetramer.</text>
</comment>
<comment type="similarity">
    <text evidence="1">Belongs to the chorismate synthase family.</text>
</comment>
<accession>B8FFQ6</accession>
<protein>
    <recommendedName>
        <fullName evidence="1">Chorismate synthase</fullName>
        <shortName evidence="1">CS</shortName>
        <ecNumber evidence="1">4.2.3.5</ecNumber>
    </recommendedName>
    <alternativeName>
        <fullName evidence="1">5-enolpyruvylshikimate-3-phosphate phospholyase</fullName>
    </alternativeName>
</protein>
<keyword id="KW-0028">Amino-acid biosynthesis</keyword>
<keyword id="KW-0057">Aromatic amino acid biosynthesis</keyword>
<keyword id="KW-0274">FAD</keyword>
<keyword id="KW-0285">Flavoprotein</keyword>
<keyword id="KW-0288">FMN</keyword>
<keyword id="KW-0456">Lyase</keyword>
<keyword id="KW-0521">NADP</keyword>
<keyword id="KW-1185">Reference proteome</keyword>
<organism>
    <name type="scientific">Desulfatibacillum aliphaticivorans</name>
    <dbReference type="NCBI Taxonomy" id="218208"/>
    <lineage>
        <taxon>Bacteria</taxon>
        <taxon>Pseudomonadati</taxon>
        <taxon>Thermodesulfobacteriota</taxon>
        <taxon>Desulfobacteria</taxon>
        <taxon>Desulfobacterales</taxon>
        <taxon>Desulfatibacillaceae</taxon>
        <taxon>Desulfatibacillum</taxon>
    </lineage>
</organism>
<reference key="1">
    <citation type="journal article" date="2012" name="Environ. Microbiol.">
        <title>The genome sequence of Desulfatibacillum alkenivorans AK-01: a blueprint for anaerobic alkane oxidation.</title>
        <authorList>
            <person name="Callaghan A.V."/>
            <person name="Morris B.E."/>
            <person name="Pereira I.A."/>
            <person name="McInerney M.J."/>
            <person name="Austin R.N."/>
            <person name="Groves J.T."/>
            <person name="Kukor J.J."/>
            <person name="Suflita J.M."/>
            <person name="Young L.Y."/>
            <person name="Zylstra G.J."/>
            <person name="Wawrik B."/>
        </authorList>
    </citation>
    <scope>NUCLEOTIDE SEQUENCE [LARGE SCALE GENOMIC DNA]</scope>
    <source>
        <strain>AK-01</strain>
    </source>
</reference>
<proteinExistence type="inferred from homology"/>
<name>AROC_DESAL</name>
<gene>
    <name evidence="1" type="primary">aroC</name>
    <name type="ordered locus">Dalk_1764</name>
</gene>
<feature type="chain" id="PRO_1000119487" description="Chorismate synthase">
    <location>
        <begin position="1"/>
        <end position="358"/>
    </location>
</feature>
<feature type="binding site" evidence="1">
    <location>
        <position position="48"/>
    </location>
    <ligand>
        <name>NADP(+)</name>
        <dbReference type="ChEBI" id="CHEBI:58349"/>
    </ligand>
</feature>
<feature type="binding site" evidence="1">
    <location>
        <begin position="125"/>
        <end position="127"/>
    </location>
    <ligand>
        <name>FMN</name>
        <dbReference type="ChEBI" id="CHEBI:58210"/>
    </ligand>
</feature>
<feature type="binding site" evidence="1">
    <location>
        <position position="277"/>
    </location>
    <ligand>
        <name>FMN</name>
        <dbReference type="ChEBI" id="CHEBI:58210"/>
    </ligand>
</feature>
<feature type="binding site" evidence="1">
    <location>
        <begin position="292"/>
        <end position="296"/>
    </location>
    <ligand>
        <name>FMN</name>
        <dbReference type="ChEBI" id="CHEBI:58210"/>
    </ligand>
</feature>
<feature type="binding site" evidence="1">
    <location>
        <position position="318"/>
    </location>
    <ligand>
        <name>FMN</name>
        <dbReference type="ChEBI" id="CHEBI:58210"/>
    </ligand>
</feature>
<dbReference type="EC" id="4.2.3.5" evidence="1"/>
<dbReference type="EMBL" id="CP001322">
    <property type="protein sequence ID" value="ACL03461.1"/>
    <property type="molecule type" value="Genomic_DNA"/>
</dbReference>
<dbReference type="RefSeq" id="WP_012610895.1">
    <property type="nucleotide sequence ID" value="NC_011768.1"/>
</dbReference>
<dbReference type="SMR" id="B8FFQ6"/>
<dbReference type="KEGG" id="dal:Dalk_1764"/>
<dbReference type="eggNOG" id="COG0082">
    <property type="taxonomic scope" value="Bacteria"/>
</dbReference>
<dbReference type="HOGENOM" id="CLU_034547_0_0_7"/>
<dbReference type="UniPathway" id="UPA00053">
    <property type="reaction ID" value="UER00090"/>
</dbReference>
<dbReference type="Proteomes" id="UP000000739">
    <property type="component" value="Chromosome"/>
</dbReference>
<dbReference type="GO" id="GO:0005829">
    <property type="term" value="C:cytosol"/>
    <property type="evidence" value="ECO:0007669"/>
    <property type="project" value="TreeGrafter"/>
</dbReference>
<dbReference type="GO" id="GO:0004107">
    <property type="term" value="F:chorismate synthase activity"/>
    <property type="evidence" value="ECO:0007669"/>
    <property type="project" value="UniProtKB-UniRule"/>
</dbReference>
<dbReference type="GO" id="GO:0010181">
    <property type="term" value="F:FMN binding"/>
    <property type="evidence" value="ECO:0007669"/>
    <property type="project" value="TreeGrafter"/>
</dbReference>
<dbReference type="GO" id="GO:0008652">
    <property type="term" value="P:amino acid biosynthetic process"/>
    <property type="evidence" value="ECO:0007669"/>
    <property type="project" value="UniProtKB-KW"/>
</dbReference>
<dbReference type="GO" id="GO:0009073">
    <property type="term" value="P:aromatic amino acid family biosynthetic process"/>
    <property type="evidence" value="ECO:0007669"/>
    <property type="project" value="UniProtKB-KW"/>
</dbReference>
<dbReference type="GO" id="GO:0009423">
    <property type="term" value="P:chorismate biosynthetic process"/>
    <property type="evidence" value="ECO:0007669"/>
    <property type="project" value="UniProtKB-UniRule"/>
</dbReference>
<dbReference type="CDD" id="cd07304">
    <property type="entry name" value="Chorismate_synthase"/>
    <property type="match status" value="1"/>
</dbReference>
<dbReference type="FunFam" id="3.60.150.10:FF:000002">
    <property type="entry name" value="Chorismate synthase"/>
    <property type="match status" value="1"/>
</dbReference>
<dbReference type="Gene3D" id="3.60.150.10">
    <property type="entry name" value="Chorismate synthase AroC"/>
    <property type="match status" value="1"/>
</dbReference>
<dbReference type="HAMAP" id="MF_00300">
    <property type="entry name" value="Chorismate_synth"/>
    <property type="match status" value="1"/>
</dbReference>
<dbReference type="InterPro" id="IPR000453">
    <property type="entry name" value="Chorismate_synth"/>
</dbReference>
<dbReference type="InterPro" id="IPR035904">
    <property type="entry name" value="Chorismate_synth_AroC_sf"/>
</dbReference>
<dbReference type="InterPro" id="IPR020541">
    <property type="entry name" value="Chorismate_synthase_CS"/>
</dbReference>
<dbReference type="NCBIfam" id="TIGR00033">
    <property type="entry name" value="aroC"/>
    <property type="match status" value="1"/>
</dbReference>
<dbReference type="NCBIfam" id="NF003793">
    <property type="entry name" value="PRK05382.1"/>
    <property type="match status" value="1"/>
</dbReference>
<dbReference type="PANTHER" id="PTHR21085">
    <property type="entry name" value="CHORISMATE SYNTHASE"/>
    <property type="match status" value="1"/>
</dbReference>
<dbReference type="PANTHER" id="PTHR21085:SF0">
    <property type="entry name" value="CHORISMATE SYNTHASE"/>
    <property type="match status" value="1"/>
</dbReference>
<dbReference type="Pfam" id="PF01264">
    <property type="entry name" value="Chorismate_synt"/>
    <property type="match status" value="1"/>
</dbReference>
<dbReference type="PIRSF" id="PIRSF001456">
    <property type="entry name" value="Chorismate_synth"/>
    <property type="match status" value="1"/>
</dbReference>
<dbReference type="SUPFAM" id="SSF103263">
    <property type="entry name" value="Chorismate synthase, AroC"/>
    <property type="match status" value="1"/>
</dbReference>
<dbReference type="PROSITE" id="PS00787">
    <property type="entry name" value="CHORISMATE_SYNTHASE_1"/>
    <property type="match status" value="1"/>
</dbReference>
<dbReference type="PROSITE" id="PS00788">
    <property type="entry name" value="CHORISMATE_SYNTHASE_2"/>
    <property type="match status" value="1"/>
</dbReference>
<evidence type="ECO:0000255" key="1">
    <source>
        <dbReference type="HAMAP-Rule" id="MF_00300"/>
    </source>
</evidence>